<protein>
    <recommendedName>
        <fullName>Actin, cytoplasmic 1</fullName>
        <ecNumber evidence="4">3.6.4.-</ecNumber>
    </recommendedName>
    <alternativeName>
        <fullName>Beta-actin</fullName>
    </alternativeName>
    <component>
        <recommendedName>
            <fullName>Actin, cytoplasmic 1, N-terminally processed</fullName>
        </recommendedName>
    </component>
</protein>
<sequence length="375" mass="41737">MDDDIAALVVDNGSGMCKAGFAGDDAPRAVFPSIVGRPRHQGVMVGMGQKDSYVGDEAQSKRGILTLKYPIEHGIVTNWDDMEKIWHHTFYNELRVAPEEHPVLLTEAPLNPKANREKMTQIMFETFNTPAMYVAIQAVLSLYASGRTTGIVMDSGDGVTHTVPIYEGYALPHAILRLDLAGRDLTDYLMKILTERGYSFTTTAEREIVRDIKEKLCYVALDFEQEMATAASSSSLEKSYELPDGQVITIGNERFRCPEALFQPSFLGMESCGIHETTFNSIMKCDVDIRKDLYANTVLSGGTTMYPGIADRMQKEITALAPSTMKIKIIAPPERKYSVWIGGSILASLSTFQQMWISKQEYDESGPSIVHRKCF</sequence>
<organism>
    <name type="scientific">Cavia porcellus</name>
    <name type="common">Guinea pig</name>
    <dbReference type="NCBI Taxonomy" id="10141"/>
    <lineage>
        <taxon>Eukaryota</taxon>
        <taxon>Metazoa</taxon>
        <taxon>Chordata</taxon>
        <taxon>Craniata</taxon>
        <taxon>Vertebrata</taxon>
        <taxon>Euteleostomi</taxon>
        <taxon>Mammalia</taxon>
        <taxon>Eutheria</taxon>
        <taxon>Euarchontoglires</taxon>
        <taxon>Glires</taxon>
        <taxon>Rodentia</taxon>
        <taxon>Hystricomorpha</taxon>
        <taxon>Caviidae</taxon>
        <taxon>Cavia</taxon>
    </lineage>
</organism>
<comment type="function">
    <text evidence="2 5">Actin is a highly conserved protein that polymerizes to produce filaments that form cross-linked networks in the cytoplasm of cells (By similarity). Actin exists in both monomeric (G-actin) and polymeric (F-actin) forms, both forms playing key functions, such as cell motility and contraction (By similarity). In addition to their role in the cytoplasmic cytoskeleton, G- and F-actin also localize in the nucleus, and regulate gene transcription and motility and repair of damaged DNA (By similarity). Plays a role in the assembly of the gamma-tubulin ring complex (gTuRC), which regulates the minus-end nucleation of alpha-beta tubulin heterodimers that grow into microtubule protafilaments (By similarity). Part of the ACTR1A/ACTB filament around which the dynactin complex is built (By similarity). The dynactin multiprotein complex activates the molecular motor dynein for ultra-processive transport along microtubules (By similarity).</text>
</comment>
<comment type="catalytic activity">
    <reaction evidence="4">
        <text>ATP + H2O = ADP + phosphate + H(+)</text>
        <dbReference type="Rhea" id="RHEA:13065"/>
        <dbReference type="ChEBI" id="CHEBI:15377"/>
        <dbReference type="ChEBI" id="CHEBI:15378"/>
        <dbReference type="ChEBI" id="CHEBI:30616"/>
        <dbReference type="ChEBI" id="CHEBI:43474"/>
        <dbReference type="ChEBI" id="CHEBI:456216"/>
    </reaction>
</comment>
<comment type="subunit">
    <text evidence="1 2 3 5">Polymerization of globular actin (G-actin) leads to a structural filament (F-actin) in the form of a two-stranded helix (By similarity). Each actin can bind to 4 others (By similarity). Identified in a IGF2BP1-dependent mRNP granule complex containing untranslated mRNAs (By similarity). Component of the BAF complex, which includes at least actin (ACTB), ARID1A, ARID1B/BAF250, SMARCA2, SMARCA4/BRG1, ACTL6A/BAF53, ACTL6B/BAF53B, SMARCE1/BAF57 SMARCC1/BAF155, SMARCC2/BAF170, SMARCB1/SNF5/INI1, and one or more of SMARCD1/BAF60A, SMARCD2/BAF60B, or SMARCD3/BAF60C (By similarity). In muscle cells, the BAF complex also contains DPF3 (By similarity). Found in a complex with XPO6, Ran, ACTB and PFN1 (By similarity). Interacts with PFN1 (By similarity). Interacts with XPO6 and EMD (By similarity). Interacts with ERBB2 (By similarity). Interacts with GCSAM (By similarity). Interacts with TBC1D21 (By similarity). Interacts with CPNE1 (via VWFA domain) and CPNE4 (via VWFA domain) (By similarity). Interacts with DHX9 (via C-terminus); this interaction is direct and mediates the attachment to nuclear ribonucleoprotein complexes (By similarity). Interacts with FAM107A (By similarity). Associates with the gamma-tubulin ring complex (gTuRC) consisting of TUBGCP2, TUBGCP3, TUBGCP4, TUBGCP5 and TUBGCP6 and gamma-tubulin TUBG1 or TUBG2; within the complex, interacts with TUBGCP3 and TUBGCP6 to form a luminal bridge with MZT1 that stabilizes the initial structure during complex assembly (By similarity). Part of the ACTR1A/ACTB filament around which the dynactin complex is built (By similarity). The filament contains 8 copies of ACTR1A and 1 ACTB (By similarity). Interacts with TPRN which forms ring-like structures in the stereocilium taper region; the interaction may stabilize stereocilia in inner ear hair cells (By similarity). Interacts with AMOTL2 (via N-terminus), the interaction facilitates binding of cell junction complexes to actin fibers in endothelial cells (By similarity).</text>
</comment>
<comment type="subcellular location">
    <subcellularLocation>
        <location evidence="2">Cytoplasm</location>
        <location evidence="2">Cytoskeleton</location>
    </subcellularLocation>
    <subcellularLocation>
        <location evidence="2">Nucleus</location>
    </subcellularLocation>
    <text evidence="2">Localized in cytoplasmic mRNP granules containing untranslated mRNAs.</text>
</comment>
<comment type="PTM">
    <molecule>Actin, cytoplasmic 1</molecule>
    <text evidence="2">N-terminal cleavage of acetylated methionine of immature cytoplasmic actin by ACTMAP.</text>
</comment>
<comment type="PTM">
    <text evidence="2">ISGylated.</text>
</comment>
<comment type="PTM">
    <text evidence="3">Oxidation of Met-44 and Met-47 by MICALs (MICAL1, MICAL2 or MICAL3) to form methionine sulfoxide promotes actin filament depolymerization. MICAL1 and MICAL2 produce the (R)-S-oxide form. The (R)-S-oxide form is reverted by MSRB1 and MSRB2, which promote actin repolymerization.</text>
</comment>
<comment type="PTM">
    <text evidence="2">Monomethylation at Lys-84 (K84me1) regulates actin-myosin interaction and actomyosin-dependent processes. Demethylation by ALKBH4 is required for maintaining actomyosin dynamics supporting normal cleavage furrow ingression during cytokinesis and cell migration.</text>
</comment>
<comment type="PTM">
    <molecule>Actin, cytoplasmic 1, N-terminally processed</molecule>
    <text evidence="2">N-terminal acetylation by NAA80 affects actin filament depolymerization and elongation, including elongation driven by formins. In contrast, filament nucleation by the Arp2/3 complex is not affected.</text>
</comment>
<comment type="PTM">
    <text evidence="2 3">Methylated at His-73 by SETD3 (By similarity). Methylation at His-73 is required for smooth muscle contraction of the laboring uterus during delivery (By similarity).</text>
</comment>
<comment type="miscellaneous">
    <text evidence="2">In vertebrates 3 main groups of actin isoforms, alpha, beta and gamma have been identified. The alpha actins are found in muscle tissues and are a major constituent of the contractile apparatus. The beta and gamma actins coexist in most cell types as components of the cytoskeleton and as mediators of internal cell motility.</text>
</comment>
<comment type="similarity">
    <text evidence="6">Belongs to the actin family.</text>
</comment>
<accession>Q71FK5</accession>
<evidence type="ECO:0000250" key="1">
    <source>
        <dbReference type="UniProtKB" id="O18840"/>
    </source>
</evidence>
<evidence type="ECO:0000250" key="2">
    <source>
        <dbReference type="UniProtKB" id="P60709"/>
    </source>
</evidence>
<evidence type="ECO:0000250" key="3">
    <source>
        <dbReference type="UniProtKB" id="P60710"/>
    </source>
</evidence>
<evidence type="ECO:0000250" key="4">
    <source>
        <dbReference type="UniProtKB" id="P68137"/>
    </source>
</evidence>
<evidence type="ECO:0000250" key="5">
    <source>
        <dbReference type="UniProtKB" id="Q6QAQ1"/>
    </source>
</evidence>
<evidence type="ECO:0000305" key="6"/>
<proteinExistence type="evidence at transcript level"/>
<dbReference type="EC" id="3.6.4.-" evidence="4"/>
<dbReference type="EMBL" id="AF508792">
    <property type="protein sequence ID" value="AAM34270.1"/>
    <property type="molecule type" value="mRNA"/>
</dbReference>
<dbReference type="RefSeq" id="NP_001166380.1">
    <property type="nucleotide sequence ID" value="NM_001172909.1"/>
</dbReference>
<dbReference type="RefSeq" id="XP_005003710.1">
    <property type="nucleotide sequence ID" value="XM_005003653.2"/>
</dbReference>
<dbReference type="SMR" id="Q71FK5"/>
<dbReference type="FunCoup" id="Q71FK5">
    <property type="interactions" value="2178"/>
</dbReference>
<dbReference type="STRING" id="10141.ENSCPOP00000022236"/>
<dbReference type="Ensembl" id="ENSCPOT00000013600.3">
    <property type="protein sequence ID" value="ENSCPOP00000012125.2"/>
    <property type="gene ID" value="ENSCPOG00000013467.4"/>
</dbReference>
<dbReference type="Ensembl" id="ENSCPOT00000044361.1">
    <property type="protein sequence ID" value="ENSCPOP00000022236.1"/>
    <property type="gene ID" value="ENSCPOG00000013467.4"/>
</dbReference>
<dbReference type="GeneID" id="100135470"/>
<dbReference type="KEGG" id="cpoc:100135470"/>
<dbReference type="CTD" id="60"/>
<dbReference type="VEuPathDB" id="HostDB:ENSCPOG00000013467"/>
<dbReference type="eggNOG" id="KOG0676">
    <property type="taxonomic scope" value="Eukaryota"/>
</dbReference>
<dbReference type="GeneTree" id="ENSGT00950000182960"/>
<dbReference type="HOGENOM" id="CLU_027965_0_2_1"/>
<dbReference type="InParanoid" id="Q71FK5"/>
<dbReference type="OMA" id="FHTTAER"/>
<dbReference type="OrthoDB" id="9546537at2759"/>
<dbReference type="TreeFam" id="TF354237"/>
<dbReference type="Proteomes" id="UP000005447">
    <property type="component" value="Unassembled WGS sequence"/>
</dbReference>
<dbReference type="Bgee" id="ENSCPOG00000013467">
    <property type="expression patterns" value="Expressed in uterine cervix and 13 other cell types or tissues"/>
</dbReference>
<dbReference type="GO" id="GO:0015629">
    <property type="term" value="C:actin cytoskeleton"/>
    <property type="evidence" value="ECO:0000250"/>
    <property type="project" value="UniProtKB"/>
</dbReference>
<dbReference type="GO" id="GO:0005912">
    <property type="term" value="C:adherens junction"/>
    <property type="evidence" value="ECO:0007669"/>
    <property type="project" value="Ensembl"/>
</dbReference>
<dbReference type="GO" id="GO:0043296">
    <property type="term" value="C:apical junction complex"/>
    <property type="evidence" value="ECO:0007669"/>
    <property type="project" value="Ensembl"/>
</dbReference>
<dbReference type="GO" id="GO:0005903">
    <property type="term" value="C:brush border"/>
    <property type="evidence" value="ECO:0007669"/>
    <property type="project" value="Ensembl"/>
</dbReference>
<dbReference type="GO" id="GO:0044305">
    <property type="term" value="C:calyx of Held"/>
    <property type="evidence" value="ECO:0007669"/>
    <property type="project" value="Ensembl"/>
</dbReference>
<dbReference type="GO" id="GO:0030863">
    <property type="term" value="C:cortical cytoskeleton"/>
    <property type="evidence" value="ECO:0007669"/>
    <property type="project" value="Ensembl"/>
</dbReference>
<dbReference type="GO" id="GO:0036464">
    <property type="term" value="C:cytoplasmic ribonucleoprotein granule"/>
    <property type="evidence" value="ECO:0007669"/>
    <property type="project" value="Ensembl"/>
</dbReference>
<dbReference type="GO" id="GO:0005856">
    <property type="term" value="C:cytoskeleton"/>
    <property type="evidence" value="ECO:0000250"/>
    <property type="project" value="AgBase"/>
</dbReference>
<dbReference type="GO" id="GO:0005829">
    <property type="term" value="C:cytosol"/>
    <property type="evidence" value="ECO:0007669"/>
    <property type="project" value="Ensembl"/>
</dbReference>
<dbReference type="GO" id="GO:0097433">
    <property type="term" value="C:dense body"/>
    <property type="evidence" value="ECO:0000250"/>
    <property type="project" value="AgBase"/>
</dbReference>
<dbReference type="GO" id="GO:0005925">
    <property type="term" value="C:focal adhesion"/>
    <property type="evidence" value="ECO:0000250"/>
    <property type="project" value="AgBase"/>
</dbReference>
<dbReference type="GO" id="GO:0098978">
    <property type="term" value="C:glutamatergic synapse"/>
    <property type="evidence" value="ECO:0007669"/>
    <property type="project" value="Ensembl"/>
</dbReference>
<dbReference type="GO" id="GO:0030027">
    <property type="term" value="C:lamellipodium"/>
    <property type="evidence" value="ECO:0007669"/>
    <property type="project" value="Ensembl"/>
</dbReference>
<dbReference type="GO" id="GO:0035267">
    <property type="term" value="C:NuA4 histone acetyltransferase complex"/>
    <property type="evidence" value="ECO:0007669"/>
    <property type="project" value="Ensembl"/>
</dbReference>
<dbReference type="GO" id="GO:0000786">
    <property type="term" value="C:nucleosome"/>
    <property type="evidence" value="ECO:0007669"/>
    <property type="project" value="Ensembl"/>
</dbReference>
<dbReference type="GO" id="GO:0005634">
    <property type="term" value="C:nucleus"/>
    <property type="evidence" value="ECO:0000250"/>
    <property type="project" value="UniProtKB"/>
</dbReference>
<dbReference type="GO" id="GO:0005886">
    <property type="term" value="C:plasma membrane"/>
    <property type="evidence" value="ECO:0000250"/>
    <property type="project" value="AgBase"/>
</dbReference>
<dbReference type="GO" id="GO:0098871">
    <property type="term" value="C:postsynaptic actin cytoskeleton"/>
    <property type="evidence" value="ECO:0007669"/>
    <property type="project" value="Ensembl"/>
</dbReference>
<dbReference type="GO" id="GO:0032991">
    <property type="term" value="C:protein-containing complex"/>
    <property type="evidence" value="ECO:0000250"/>
    <property type="project" value="UniProtKB"/>
</dbReference>
<dbReference type="GO" id="GO:1990904">
    <property type="term" value="C:ribonucleoprotein complex"/>
    <property type="evidence" value="ECO:0007669"/>
    <property type="project" value="Ensembl"/>
</dbReference>
<dbReference type="GO" id="GO:0098685">
    <property type="term" value="C:Schaffer collateral - CA1 synapse"/>
    <property type="evidence" value="ECO:0007669"/>
    <property type="project" value="Ensembl"/>
</dbReference>
<dbReference type="GO" id="GO:0070160">
    <property type="term" value="C:tight junction"/>
    <property type="evidence" value="ECO:0007669"/>
    <property type="project" value="Ensembl"/>
</dbReference>
<dbReference type="GO" id="GO:0005524">
    <property type="term" value="F:ATP binding"/>
    <property type="evidence" value="ECO:0007669"/>
    <property type="project" value="UniProtKB-KW"/>
</dbReference>
<dbReference type="GO" id="GO:0016887">
    <property type="term" value="F:ATP hydrolysis activity"/>
    <property type="evidence" value="ECO:0007669"/>
    <property type="project" value="Ensembl"/>
</dbReference>
<dbReference type="GO" id="GO:0042802">
    <property type="term" value="F:identical protein binding"/>
    <property type="evidence" value="ECO:0007669"/>
    <property type="project" value="Ensembl"/>
</dbReference>
<dbReference type="GO" id="GO:0019894">
    <property type="term" value="F:kinesin binding"/>
    <property type="evidence" value="ECO:0007669"/>
    <property type="project" value="Ensembl"/>
</dbReference>
<dbReference type="GO" id="GO:0050998">
    <property type="term" value="F:nitric-oxide synthase binding"/>
    <property type="evidence" value="ECO:0007669"/>
    <property type="project" value="Ensembl"/>
</dbReference>
<dbReference type="GO" id="GO:0030235">
    <property type="term" value="F:nitric-oxide synthase regulator activity"/>
    <property type="evidence" value="ECO:0007669"/>
    <property type="project" value="Ensembl"/>
</dbReference>
<dbReference type="GO" id="GO:0019901">
    <property type="term" value="F:protein kinase binding"/>
    <property type="evidence" value="ECO:0007669"/>
    <property type="project" value="Ensembl"/>
</dbReference>
<dbReference type="GO" id="GO:0098973">
    <property type="term" value="F:structural constituent of postsynaptic actin cytoskeleton"/>
    <property type="evidence" value="ECO:0007669"/>
    <property type="project" value="Ensembl"/>
</dbReference>
<dbReference type="GO" id="GO:0030957">
    <property type="term" value="F:Tat protein binding"/>
    <property type="evidence" value="ECO:0007669"/>
    <property type="project" value="Ensembl"/>
</dbReference>
<dbReference type="GO" id="GO:0141108">
    <property type="term" value="F:transporter regulator activity"/>
    <property type="evidence" value="ECO:0007669"/>
    <property type="project" value="Ensembl"/>
</dbReference>
<dbReference type="GO" id="GO:0034333">
    <property type="term" value="P:adherens junction assembly"/>
    <property type="evidence" value="ECO:0007669"/>
    <property type="project" value="Ensembl"/>
</dbReference>
<dbReference type="GO" id="GO:0045176">
    <property type="term" value="P:apical protein localization"/>
    <property type="evidence" value="ECO:0007669"/>
    <property type="project" value="Ensembl"/>
</dbReference>
<dbReference type="GO" id="GO:0048870">
    <property type="term" value="P:cell motility"/>
    <property type="evidence" value="ECO:0007669"/>
    <property type="project" value="Ensembl"/>
</dbReference>
<dbReference type="GO" id="GO:0072749">
    <property type="term" value="P:cellular response to cytochalasin B"/>
    <property type="evidence" value="ECO:0007669"/>
    <property type="project" value="Ensembl"/>
</dbReference>
<dbReference type="GO" id="GO:0007163">
    <property type="term" value="P:establishment or maintenance of cell polarity"/>
    <property type="evidence" value="ECO:0007669"/>
    <property type="project" value="Ensembl"/>
</dbReference>
<dbReference type="GO" id="GO:0001738">
    <property type="term" value="P:morphogenesis of a polarized epithelium"/>
    <property type="evidence" value="ECO:0007669"/>
    <property type="project" value="Ensembl"/>
</dbReference>
<dbReference type="GO" id="GO:1905168">
    <property type="term" value="P:positive regulation of double-strand break repair via homologous recombination"/>
    <property type="evidence" value="ECO:0007669"/>
    <property type="project" value="Ensembl"/>
</dbReference>
<dbReference type="GO" id="GO:0071896">
    <property type="term" value="P:protein localization to adherens junction"/>
    <property type="evidence" value="ECO:0007669"/>
    <property type="project" value="Ensembl"/>
</dbReference>
<dbReference type="GO" id="GO:0051726">
    <property type="term" value="P:regulation of cell cycle"/>
    <property type="evidence" value="ECO:0007669"/>
    <property type="project" value="Ensembl"/>
</dbReference>
<dbReference type="GO" id="GO:0051621">
    <property type="term" value="P:regulation of norepinephrine uptake"/>
    <property type="evidence" value="ECO:0007669"/>
    <property type="project" value="Ensembl"/>
</dbReference>
<dbReference type="GO" id="GO:1903076">
    <property type="term" value="P:regulation of protein localization to plasma membrane"/>
    <property type="evidence" value="ECO:0007669"/>
    <property type="project" value="Ensembl"/>
</dbReference>
<dbReference type="GO" id="GO:1900242">
    <property type="term" value="P:regulation of synaptic vesicle endocytosis"/>
    <property type="evidence" value="ECO:0007669"/>
    <property type="project" value="Ensembl"/>
</dbReference>
<dbReference type="GO" id="GO:0150111">
    <property type="term" value="P:regulation of transepithelial transport"/>
    <property type="evidence" value="ECO:0007669"/>
    <property type="project" value="Ensembl"/>
</dbReference>
<dbReference type="CDD" id="cd10224">
    <property type="entry name" value="ASKHA_NBD_actin"/>
    <property type="match status" value="1"/>
</dbReference>
<dbReference type="FunFam" id="3.30.420.40:FF:000131">
    <property type="entry name" value="Actin, alpha skeletal muscle"/>
    <property type="match status" value="1"/>
</dbReference>
<dbReference type="FunFam" id="3.30.420.40:FF:000291">
    <property type="entry name" value="Actin, alpha skeletal muscle"/>
    <property type="match status" value="1"/>
</dbReference>
<dbReference type="FunFam" id="3.90.640.10:FF:000047">
    <property type="entry name" value="Actin, alpha skeletal muscle"/>
    <property type="match status" value="1"/>
</dbReference>
<dbReference type="FunFam" id="3.30.420.40:FF:000058">
    <property type="entry name" value="Putative actin-related protein 5"/>
    <property type="match status" value="1"/>
</dbReference>
<dbReference type="Gene3D" id="3.30.420.40">
    <property type="match status" value="2"/>
</dbReference>
<dbReference type="Gene3D" id="3.90.640.10">
    <property type="entry name" value="Actin, Chain A, domain 4"/>
    <property type="match status" value="1"/>
</dbReference>
<dbReference type="InterPro" id="IPR004000">
    <property type="entry name" value="Actin"/>
</dbReference>
<dbReference type="InterPro" id="IPR020902">
    <property type="entry name" value="Actin/actin-like_CS"/>
</dbReference>
<dbReference type="InterPro" id="IPR004001">
    <property type="entry name" value="Actin_CS"/>
</dbReference>
<dbReference type="InterPro" id="IPR043129">
    <property type="entry name" value="ATPase_NBD"/>
</dbReference>
<dbReference type="PANTHER" id="PTHR11937">
    <property type="entry name" value="ACTIN"/>
    <property type="match status" value="1"/>
</dbReference>
<dbReference type="Pfam" id="PF00022">
    <property type="entry name" value="Actin"/>
    <property type="match status" value="1"/>
</dbReference>
<dbReference type="PRINTS" id="PR00190">
    <property type="entry name" value="ACTIN"/>
</dbReference>
<dbReference type="SMART" id="SM00268">
    <property type="entry name" value="ACTIN"/>
    <property type="match status" value="1"/>
</dbReference>
<dbReference type="SUPFAM" id="SSF53067">
    <property type="entry name" value="Actin-like ATPase domain"/>
    <property type="match status" value="2"/>
</dbReference>
<dbReference type="PROSITE" id="PS00406">
    <property type="entry name" value="ACTINS_1"/>
    <property type="match status" value="1"/>
</dbReference>
<dbReference type="PROSITE" id="PS00432">
    <property type="entry name" value="ACTINS_2"/>
    <property type="match status" value="1"/>
</dbReference>
<dbReference type="PROSITE" id="PS01132">
    <property type="entry name" value="ACTINS_ACT_LIKE"/>
    <property type="match status" value="1"/>
</dbReference>
<name>ACTB_CAVPO</name>
<feature type="chain" id="PRO_0000000763" description="Actin, cytoplasmic 1">
    <location>
        <begin position="1"/>
        <end position="375"/>
    </location>
</feature>
<feature type="initiator methionine" description="Removed; alternate" evidence="2">
    <location>
        <position position="1"/>
    </location>
</feature>
<feature type="chain" id="PRO_0000367069" description="Actin, cytoplasmic 1, N-terminally processed">
    <location>
        <begin position="2"/>
        <end position="375"/>
    </location>
</feature>
<feature type="modified residue" description="N-acetylmethionine" evidence="2">
    <location>
        <position position="1"/>
    </location>
</feature>
<feature type="modified residue" description="N-acetylaspartate; in Actin, cytoplasmic 1, N-terminally processed" evidence="2">
    <location>
        <position position="2"/>
    </location>
</feature>
<feature type="modified residue" description="Methionine (R)-sulfoxide" evidence="3">
    <location>
        <position position="44"/>
    </location>
</feature>
<feature type="modified residue" description="Methionine (R)-sulfoxide" evidence="3">
    <location>
        <position position="47"/>
    </location>
</feature>
<feature type="modified residue" description="Tele-methylhistidine" evidence="3">
    <location>
        <position position="73"/>
    </location>
</feature>
<feature type="modified residue" description="N6-methyllysine" evidence="2">
    <location>
        <position position="84"/>
    </location>
</feature>
<keyword id="KW-0007">Acetylation</keyword>
<keyword id="KW-0067">ATP-binding</keyword>
<keyword id="KW-0963">Cytoplasm</keyword>
<keyword id="KW-0206">Cytoskeleton</keyword>
<keyword id="KW-0378">Hydrolase</keyword>
<keyword id="KW-0488">Methylation</keyword>
<keyword id="KW-0547">Nucleotide-binding</keyword>
<keyword id="KW-0539">Nucleus</keyword>
<keyword id="KW-0558">Oxidation</keyword>
<keyword id="KW-1185">Reference proteome</keyword>
<keyword id="KW-0832">Ubl conjugation</keyword>
<reference key="1">
    <citation type="journal article" date="2003" name="Brain Res. Mol. Brain Res.">
        <title>Cloning of a C-terminally truncated NK-1 receptor from guinea-pig nervous system.</title>
        <authorList>
            <person name="Baker S.J."/>
            <person name="Morris J.L."/>
            <person name="Gibbins I.L."/>
        </authorList>
    </citation>
    <scope>NUCLEOTIDE SEQUENCE [MRNA]</scope>
    <source>
        <strain>Hartley</strain>
        <tissue>Brain</tissue>
    </source>
</reference>
<gene>
    <name type="primary">ACTB</name>
</gene>